<organism>
    <name type="scientific">Mycolicibacterium gilvum (strain PYR-GCK)</name>
    <name type="common">Mycobacterium gilvum (strain PYR-GCK)</name>
    <dbReference type="NCBI Taxonomy" id="350054"/>
    <lineage>
        <taxon>Bacteria</taxon>
        <taxon>Bacillati</taxon>
        <taxon>Actinomycetota</taxon>
        <taxon>Actinomycetes</taxon>
        <taxon>Mycobacteriales</taxon>
        <taxon>Mycobacteriaceae</taxon>
        <taxon>Mycolicibacterium</taxon>
    </lineage>
</organism>
<comment type="similarity">
    <text evidence="1">Belongs to the bacterial ribosomal protein bL32 family.</text>
</comment>
<evidence type="ECO:0000255" key="1">
    <source>
        <dbReference type="HAMAP-Rule" id="MF_00340"/>
    </source>
</evidence>
<evidence type="ECO:0000305" key="2"/>
<protein>
    <recommendedName>
        <fullName evidence="1">Large ribosomal subunit protein bL32</fullName>
    </recommendedName>
    <alternativeName>
        <fullName evidence="2">50S ribosomal protein L32</fullName>
    </alternativeName>
</protein>
<gene>
    <name evidence="1" type="primary">rpmF</name>
    <name type="ordered locus">Mflv_1886</name>
</gene>
<proteinExistence type="inferred from homology"/>
<name>RL32_MYCGI</name>
<dbReference type="EMBL" id="CP000656">
    <property type="protein sequence ID" value="ABP44366.1"/>
    <property type="molecule type" value="Genomic_DNA"/>
</dbReference>
<dbReference type="SMR" id="A4T6T4"/>
<dbReference type="STRING" id="350054.Mflv_1886"/>
<dbReference type="KEGG" id="mgi:Mflv_1886"/>
<dbReference type="eggNOG" id="ENOG5033AVR">
    <property type="taxonomic scope" value="Bacteria"/>
</dbReference>
<dbReference type="HOGENOM" id="CLU_203263_0_0_11"/>
<dbReference type="OrthoDB" id="9807363at2"/>
<dbReference type="GO" id="GO:0015934">
    <property type="term" value="C:large ribosomal subunit"/>
    <property type="evidence" value="ECO:0007669"/>
    <property type="project" value="InterPro"/>
</dbReference>
<dbReference type="GO" id="GO:0003735">
    <property type="term" value="F:structural constituent of ribosome"/>
    <property type="evidence" value="ECO:0007669"/>
    <property type="project" value="InterPro"/>
</dbReference>
<dbReference type="GO" id="GO:0006412">
    <property type="term" value="P:translation"/>
    <property type="evidence" value="ECO:0007669"/>
    <property type="project" value="UniProtKB-UniRule"/>
</dbReference>
<dbReference type="HAMAP" id="MF_00340">
    <property type="entry name" value="Ribosomal_bL32"/>
    <property type="match status" value="1"/>
</dbReference>
<dbReference type="InterPro" id="IPR002677">
    <property type="entry name" value="Ribosomal_bL32"/>
</dbReference>
<dbReference type="InterPro" id="IPR011332">
    <property type="entry name" value="Ribosomal_zn-bd"/>
</dbReference>
<dbReference type="NCBIfam" id="TIGR01031">
    <property type="entry name" value="rpmF_bact"/>
    <property type="match status" value="1"/>
</dbReference>
<dbReference type="Pfam" id="PF01783">
    <property type="entry name" value="Ribosomal_L32p"/>
    <property type="match status" value="1"/>
</dbReference>
<dbReference type="SUPFAM" id="SSF57829">
    <property type="entry name" value="Zn-binding ribosomal proteins"/>
    <property type="match status" value="1"/>
</dbReference>
<keyword id="KW-0687">Ribonucleoprotein</keyword>
<keyword id="KW-0689">Ribosomal protein</keyword>
<accession>A4T6T4</accession>
<feature type="chain" id="PRO_1000079334" description="Large ribosomal subunit protein bL32">
    <location>
        <begin position="1"/>
        <end position="57"/>
    </location>
</feature>
<reference key="1">
    <citation type="submission" date="2007-04" db="EMBL/GenBank/DDBJ databases">
        <title>Complete sequence of chromosome of Mycobacterium gilvum PYR-GCK.</title>
        <authorList>
            <consortium name="US DOE Joint Genome Institute"/>
            <person name="Copeland A."/>
            <person name="Lucas S."/>
            <person name="Lapidus A."/>
            <person name="Barry K."/>
            <person name="Detter J.C."/>
            <person name="Glavina del Rio T."/>
            <person name="Hammon N."/>
            <person name="Israni S."/>
            <person name="Dalin E."/>
            <person name="Tice H."/>
            <person name="Pitluck S."/>
            <person name="Chain P."/>
            <person name="Malfatti S."/>
            <person name="Shin M."/>
            <person name="Vergez L."/>
            <person name="Schmutz J."/>
            <person name="Larimer F."/>
            <person name="Land M."/>
            <person name="Hauser L."/>
            <person name="Kyrpides N."/>
            <person name="Mikhailova N."/>
            <person name="Miller C."/>
            <person name="Richardson P."/>
        </authorList>
    </citation>
    <scope>NUCLEOTIDE SEQUENCE [LARGE SCALE GENOMIC DNA]</scope>
    <source>
        <strain>PYR-GCK</strain>
    </source>
</reference>
<sequence>MAVPKRRMSRANTRSRRAQWKAEATGLVSVTVAGQPRKVPRRLLKAARLGLVDLDRR</sequence>